<keyword id="KW-0221">Differentiation</keyword>
<keyword id="KW-0472">Membrane</keyword>
<keyword id="KW-1185">Reference proteome</keyword>
<keyword id="KW-0744">Spermatogenesis</keyword>
<keyword id="KW-0812">Transmembrane</keyword>
<keyword id="KW-1133">Transmembrane helix</keyword>
<comment type="function">
    <text evidence="1">May play a role in spermatogenesis.</text>
</comment>
<comment type="interaction">
    <interactant intactId="EBI-1222614">
        <id>Q8IWB4</id>
    </interactant>
    <interactant intactId="EBI-12074168">
        <id>P81534</id>
        <label>DEFB103B</label>
    </interactant>
    <organismsDiffer>false</organismsDiffer>
    <experiments>3</experiments>
</comment>
<comment type="interaction">
    <interactant intactId="EBI-1222614">
        <id>Q8IWB4</id>
    </interactant>
    <interactant intactId="EBI-5774125">
        <id>A1E959</id>
        <label>ODAM</label>
    </interactant>
    <organismsDiffer>false</organismsDiffer>
    <experiments>3</experiments>
</comment>
<comment type="subcellular location">
    <subcellularLocation>
        <location evidence="4">Membrane</location>
        <topology evidence="4">Single-pass membrane protein</topology>
    </subcellularLocation>
</comment>
<comment type="similarity">
    <text evidence="4">Belongs to the SPATA31 family.</text>
</comment>
<comment type="sequence caution" evidence="4">
    <conflict type="erroneous initiation">
        <sequence resource="EMBL-CDS" id="AAH40528"/>
    </conflict>
</comment>
<sequence>MENLPFPLKLLSASSLNAPSSTPWVLDIFLTLVFALGFFFLLLPYLSYFRCDDPPSPSPGKRKCPVGRRRRPRGRMKNHSLRAGRECPRGLEETSDLLSQLQSLLGPHLDKGDFGQLSGPDPPGEVGERAPDGASQSSHEPMEDAAPILSPLASPDPQAKHPQDLASTPSPGPMTTSVSSLSASQPPEPSLPLEHPSPEPPALFPHPPHTPDPLACSLPPPKGFTAPPLRDSTLITPSHCDSVAFPLGTVPQSLSPHEDLVASVPAISGLGGSNSHVSASSRWQETARTSCAFNSSVQQDHLSRHPPETCQMEAGSLFLLSSDGQNVVGIQVTETAKVNIWEEKENVGSFTNRMTPEKHLNYLRNLAKSLDAEQDTTNPKPFWNMGENSKQLPGPQKLSDPRLWQESFWKNYSQLFWGLPSLHSESLVANAWVTDRSYTLQSPPFLFNEMSNVCPIQRETTMSPLLFQAQPLSHLGPECQPFISSTPQFRPTPMAQAEAQAHLQSSFPVLSPAFPSLIQNTGVACPASQNKVQALSLPETQHPEWPLLRRQLEGRLALPSRVQKSQDVFSVSTPNLPQESLTSILPENFPVSPELRRQLEQHIKKWIIQHWGNLGRIQESLDLMQLRDESPGTSQAKGKPSPWQSSMSTGESSKEAQKVKFQLERDPCPHLGQILGETPQNLSRDMKSFPRKVLGVTSEELERNLRKPLRSDSGSDLLRCTERTHIENILKAHMGRNLGQTNEGLIPVCVRRSWLAVNQALPVSNTHVKTSNLAAPKSGKACVNTAQVLSFLEPCTQQGLGAHIVRFWAKHRWGLPLRVLKPIQCFKLEKVSSLSLTQLAGPSSATCESGAGSEVEVDMFLRKPPMASLRKQVLTKASDHMPESLLASSPAWKQFQRAPRGIPSWNDHEPLKPPPAGQEGRWPSKPLTYSLTGSIQQSRSLGAQSSKAGETREAVPQCRVPLETCMLANLQATSEDVHGFEAPGTSKSSLHPRVSVSQDPRKLCLMEEVVNEFEPGMATKSETQPQVCAAVVLLPDGQASVVPHASENLVSQVPQGHLQSMPTGNMRASQELHDLMAARRSKLVHEEPRNPNCQGSCKSQRPMFPPIHKSEKSRKPNLEKHEERLEGLRTPQLTPVRKTEDTHQDEGVQLLPSKKQPPSVSPFGENIKQIFQWIFSKKKSKPAPVTAESQKTVKNRSRVYSSSAEAQGLMTAVGQMLDEKMSLCHARHASKVNQHKQKFQAPVCGFPCNHRHLFYSEHGRILSYAASSQQATLKSQGCPNRDRQIRNQQPLKSVRCNNEQWGLRHPQILHPKKAVSPVSPPQHWPKTSGASSHHHHCPRHCLLWEGI</sequence>
<name>S31A7_HUMAN</name>
<proteinExistence type="evidence at protein level"/>
<reference key="1">
    <citation type="journal article" date="2004" name="Nature">
        <title>DNA sequence and analysis of human chromosome 9.</title>
        <authorList>
            <person name="Humphray S.J."/>
            <person name="Oliver K."/>
            <person name="Hunt A.R."/>
            <person name="Plumb R.W."/>
            <person name="Loveland J.E."/>
            <person name="Howe K.L."/>
            <person name="Andrews T.D."/>
            <person name="Searle S."/>
            <person name="Hunt S.E."/>
            <person name="Scott C.E."/>
            <person name="Jones M.C."/>
            <person name="Ainscough R."/>
            <person name="Almeida J.P."/>
            <person name="Ambrose K.D."/>
            <person name="Ashwell R.I.S."/>
            <person name="Babbage A.K."/>
            <person name="Babbage S."/>
            <person name="Bagguley C.L."/>
            <person name="Bailey J."/>
            <person name="Banerjee R."/>
            <person name="Barker D.J."/>
            <person name="Barlow K.F."/>
            <person name="Bates K."/>
            <person name="Beasley H."/>
            <person name="Beasley O."/>
            <person name="Bird C.P."/>
            <person name="Bray-Allen S."/>
            <person name="Brown A.J."/>
            <person name="Brown J.Y."/>
            <person name="Burford D."/>
            <person name="Burrill W."/>
            <person name="Burton J."/>
            <person name="Carder C."/>
            <person name="Carter N.P."/>
            <person name="Chapman J.C."/>
            <person name="Chen Y."/>
            <person name="Clarke G."/>
            <person name="Clark S.Y."/>
            <person name="Clee C.M."/>
            <person name="Clegg S."/>
            <person name="Collier R.E."/>
            <person name="Corby N."/>
            <person name="Crosier M."/>
            <person name="Cummings A.T."/>
            <person name="Davies J."/>
            <person name="Dhami P."/>
            <person name="Dunn M."/>
            <person name="Dutta I."/>
            <person name="Dyer L.W."/>
            <person name="Earthrowl M.E."/>
            <person name="Faulkner L."/>
            <person name="Fleming C.J."/>
            <person name="Frankish A."/>
            <person name="Frankland J.A."/>
            <person name="French L."/>
            <person name="Fricker D.G."/>
            <person name="Garner P."/>
            <person name="Garnett J."/>
            <person name="Ghori J."/>
            <person name="Gilbert J.G.R."/>
            <person name="Glison C."/>
            <person name="Grafham D.V."/>
            <person name="Gribble S."/>
            <person name="Griffiths C."/>
            <person name="Griffiths-Jones S."/>
            <person name="Grocock R."/>
            <person name="Guy J."/>
            <person name="Hall R.E."/>
            <person name="Hammond S."/>
            <person name="Harley J.L."/>
            <person name="Harrison E.S.I."/>
            <person name="Hart E.A."/>
            <person name="Heath P.D."/>
            <person name="Henderson C.D."/>
            <person name="Hopkins B.L."/>
            <person name="Howard P.J."/>
            <person name="Howden P.J."/>
            <person name="Huckle E."/>
            <person name="Johnson C."/>
            <person name="Johnson D."/>
            <person name="Joy A.A."/>
            <person name="Kay M."/>
            <person name="Keenan S."/>
            <person name="Kershaw J.K."/>
            <person name="Kimberley A.M."/>
            <person name="King A."/>
            <person name="Knights A."/>
            <person name="Laird G.K."/>
            <person name="Langford C."/>
            <person name="Lawlor S."/>
            <person name="Leongamornlert D.A."/>
            <person name="Leversha M."/>
            <person name="Lloyd C."/>
            <person name="Lloyd D.M."/>
            <person name="Lovell J."/>
            <person name="Martin S."/>
            <person name="Mashreghi-Mohammadi M."/>
            <person name="Matthews L."/>
            <person name="McLaren S."/>
            <person name="McLay K.E."/>
            <person name="McMurray A."/>
            <person name="Milne S."/>
            <person name="Nickerson T."/>
            <person name="Nisbett J."/>
            <person name="Nordsiek G."/>
            <person name="Pearce A.V."/>
            <person name="Peck A.I."/>
            <person name="Porter K.M."/>
            <person name="Pandian R."/>
            <person name="Pelan S."/>
            <person name="Phillimore B."/>
            <person name="Povey S."/>
            <person name="Ramsey Y."/>
            <person name="Rand V."/>
            <person name="Scharfe M."/>
            <person name="Sehra H.K."/>
            <person name="Shownkeen R."/>
            <person name="Sims S.K."/>
            <person name="Skuce C.D."/>
            <person name="Smith M."/>
            <person name="Steward C.A."/>
            <person name="Swarbreck D."/>
            <person name="Sycamore N."/>
            <person name="Tester J."/>
            <person name="Thorpe A."/>
            <person name="Tracey A."/>
            <person name="Tromans A."/>
            <person name="Thomas D.W."/>
            <person name="Wall M."/>
            <person name="Wallis J.M."/>
            <person name="West A.P."/>
            <person name="Whitehead S.L."/>
            <person name="Willey D.L."/>
            <person name="Williams S.A."/>
            <person name="Wilming L."/>
            <person name="Wray P.W."/>
            <person name="Young L."/>
            <person name="Ashurst J.L."/>
            <person name="Coulson A."/>
            <person name="Blocker H."/>
            <person name="Durbin R.M."/>
            <person name="Sulston J.E."/>
            <person name="Hubbard T."/>
            <person name="Jackson M.J."/>
            <person name="Bentley D.R."/>
            <person name="Beck S."/>
            <person name="Rogers J."/>
            <person name="Dunham I."/>
        </authorList>
    </citation>
    <scope>NUCLEOTIDE SEQUENCE [LARGE SCALE GENOMIC DNA]</scope>
</reference>
<reference key="2">
    <citation type="journal article" date="2004" name="Genome Res.">
        <title>The status, quality, and expansion of the NIH full-length cDNA project: the Mammalian Gene Collection (MGC).</title>
        <authorList>
            <consortium name="The MGC Project Team"/>
        </authorList>
    </citation>
    <scope>NUCLEOTIDE SEQUENCE [LARGE SCALE MRNA]</scope>
    <source>
        <tissue>Testis</tissue>
    </source>
</reference>
<feature type="chain" id="PRO_0000280245" description="Spermatogenesis-associated protein 31A7">
    <location>
        <begin position="1"/>
        <end position="1347"/>
    </location>
</feature>
<feature type="transmembrane region" description="Helical" evidence="2">
    <location>
        <begin position="23"/>
        <end position="43"/>
    </location>
</feature>
<feature type="region of interest" description="Disordered" evidence="3">
    <location>
        <begin position="55"/>
        <end position="88"/>
    </location>
</feature>
<feature type="region of interest" description="Disordered" evidence="3">
    <location>
        <begin position="106"/>
        <end position="233"/>
    </location>
</feature>
<feature type="region of interest" description="Disordered" evidence="3">
    <location>
        <begin position="374"/>
        <end position="397"/>
    </location>
</feature>
<feature type="region of interest" description="Disordered" evidence="3">
    <location>
        <begin position="628"/>
        <end position="658"/>
    </location>
</feature>
<feature type="region of interest" description="Disordered" evidence="3">
    <location>
        <begin position="900"/>
        <end position="955"/>
    </location>
</feature>
<feature type="region of interest" description="Disordered" evidence="3">
    <location>
        <begin position="1084"/>
        <end position="1161"/>
    </location>
</feature>
<feature type="region of interest" description="Disordered" evidence="3">
    <location>
        <begin position="1313"/>
        <end position="1335"/>
    </location>
</feature>
<feature type="compositionally biased region" description="Basic residues" evidence="3">
    <location>
        <begin position="60"/>
        <end position="82"/>
    </location>
</feature>
<feature type="compositionally biased region" description="Polar residues" evidence="3">
    <location>
        <begin position="165"/>
        <end position="178"/>
    </location>
</feature>
<feature type="compositionally biased region" description="Pro residues" evidence="3">
    <location>
        <begin position="198"/>
        <end position="211"/>
    </location>
</feature>
<feature type="compositionally biased region" description="Polar residues" evidence="3">
    <location>
        <begin position="631"/>
        <end position="651"/>
    </location>
</feature>
<feature type="compositionally biased region" description="Polar residues" evidence="3">
    <location>
        <begin position="927"/>
        <end position="948"/>
    </location>
</feature>
<feature type="compositionally biased region" description="Basic and acidic residues" evidence="3">
    <location>
        <begin position="1108"/>
        <end position="1127"/>
    </location>
</feature>
<feature type="compositionally biased region" description="Basic and acidic residues" evidence="3">
    <location>
        <begin position="1137"/>
        <end position="1146"/>
    </location>
</feature>
<feature type="sequence conflict" description="In Ref. 1; CAI95396." evidence="4" ref="1">
    <original>L</original>
    <variation>V</variation>
    <location>
        <position position="41"/>
    </location>
</feature>
<feature type="sequence conflict" description="In Ref. 2; AAH40528." evidence="4" ref="2">
    <original>C</original>
    <variation>S</variation>
    <location>
        <position position="64"/>
    </location>
</feature>
<feature type="sequence conflict" description="In Ref. 1; CAI95396." evidence="4" ref="1">
    <original>P</original>
    <variation>R</variation>
    <location>
        <position position="88"/>
    </location>
</feature>
<feature type="sequence conflict" description="In Ref. 2; AAH40528." evidence="4" ref="2">
    <original>V</original>
    <variation>A</variation>
    <location>
        <position position="297"/>
    </location>
</feature>
<feature type="sequence conflict" description="In Ref. 1; CAI95396." evidence="4" ref="1">
    <original>Y</original>
    <variation>S</variation>
    <location>
        <position position="362"/>
    </location>
</feature>
<feature type="sequence conflict" description="In Ref. 2; AAH40528." evidence="4" ref="2">
    <original>L</original>
    <variation>P</variation>
    <location>
        <position position="472"/>
    </location>
</feature>
<feature type="sequence conflict" description="In Ref. 2; AAH40528." evidence="4" ref="2">
    <original>Q</original>
    <variation>R</variation>
    <location>
        <position position="625"/>
    </location>
</feature>
<feature type="sequence conflict" description="In Ref. 1; CAI95396." evidence="4" ref="1">
    <original>C</original>
    <variation>R</variation>
    <location>
        <position position="749"/>
    </location>
</feature>
<feature type="sequence conflict" description="In Ref. 2; AAH40528." evidence="4" ref="2">
    <original>V</original>
    <variation>A</variation>
    <location>
        <position position="1199"/>
    </location>
</feature>
<feature type="sequence conflict" description="In Ref. 1; CAI95396." evidence="4" ref="1">
    <original>E</original>
    <variation>K</variation>
    <location>
        <position position="1219"/>
    </location>
</feature>
<evidence type="ECO:0000250" key="1"/>
<evidence type="ECO:0000255" key="2"/>
<evidence type="ECO:0000256" key="3">
    <source>
        <dbReference type="SAM" id="MobiDB-lite"/>
    </source>
</evidence>
<evidence type="ECO:0000305" key="4"/>
<evidence type="ECO:0000312" key="5">
    <source>
        <dbReference type="HGNC" id="HGNC:32007"/>
    </source>
</evidence>
<protein>
    <recommendedName>
        <fullName evidence="4">Spermatogenesis-associated protein 31A7</fullName>
    </recommendedName>
    <alternativeName>
        <fullName evidence="4">Protein FAM75A7</fullName>
    </alternativeName>
</protein>
<dbReference type="EMBL" id="AL596385">
    <property type="protein sequence ID" value="CAI95396.1"/>
    <property type="molecule type" value="Genomic_DNA"/>
</dbReference>
<dbReference type="EMBL" id="BX005040">
    <property type="status" value="NOT_ANNOTATED_CDS"/>
    <property type="molecule type" value="Genomic_DNA"/>
</dbReference>
<dbReference type="EMBL" id="BC040528">
    <property type="protein sequence ID" value="AAH40528.1"/>
    <property type="status" value="ALT_INIT"/>
    <property type="molecule type" value="mRNA"/>
</dbReference>
<dbReference type="CCDS" id="CCDS75838.1"/>
<dbReference type="PIR" id="T12532">
    <property type="entry name" value="T12532"/>
</dbReference>
<dbReference type="RefSeq" id="NP_056482.2">
    <property type="nucleotide sequence ID" value="NM_015667.2"/>
</dbReference>
<dbReference type="BioGRID" id="117591">
    <property type="interactions" value="5"/>
</dbReference>
<dbReference type="FunCoup" id="Q8IWB4">
    <property type="interactions" value="60"/>
</dbReference>
<dbReference type="IntAct" id="Q8IWB4">
    <property type="interactions" value="3"/>
</dbReference>
<dbReference type="STRING" id="9606.ENSP00000484807"/>
<dbReference type="iPTMnet" id="Q8IWB4"/>
<dbReference type="PhosphoSitePlus" id="Q8IWB4"/>
<dbReference type="BioMuta" id="SPATA31A7"/>
<dbReference type="DMDM" id="166215080"/>
<dbReference type="jPOST" id="Q8IWB4"/>
<dbReference type="MassIVE" id="Q8IWB4"/>
<dbReference type="PaxDb" id="9606-ENSP00000484807"/>
<dbReference type="PeptideAtlas" id="Q8IWB4"/>
<dbReference type="ProteomicsDB" id="70834"/>
<dbReference type="DNASU" id="26165"/>
<dbReference type="Ensembl" id="ENST00000619167.2">
    <property type="protein sequence ID" value="ENSP00000484807.1"/>
    <property type="gene ID" value="ENSG00000276040.5"/>
</dbReference>
<dbReference type="GeneID" id="26165"/>
<dbReference type="KEGG" id="hsa:26165"/>
<dbReference type="MANE-Select" id="ENST00000619167.2">
    <property type="protein sequence ID" value="ENSP00000484807.1"/>
    <property type="RefSeq nucleotide sequence ID" value="NM_015667.2"/>
    <property type="RefSeq protein sequence ID" value="NP_056482.2"/>
</dbReference>
<dbReference type="UCSC" id="uc033ctg.2">
    <property type="organism name" value="human"/>
</dbReference>
<dbReference type="AGR" id="HGNC:32007"/>
<dbReference type="CTD" id="26165"/>
<dbReference type="GeneCards" id="SPATA31A7"/>
<dbReference type="HGNC" id="HGNC:32007">
    <property type="gene designation" value="SPATA31A7"/>
</dbReference>
<dbReference type="HPA" id="ENSG00000276040">
    <property type="expression patterns" value="Tissue enriched (testis)"/>
</dbReference>
<dbReference type="MIM" id="616584">
    <property type="type" value="gene"/>
</dbReference>
<dbReference type="neXtProt" id="NX_Q8IWB4"/>
<dbReference type="PharmGKB" id="PA162387900"/>
<dbReference type="VEuPathDB" id="HostDB:ENSG00000276040"/>
<dbReference type="eggNOG" id="ENOG502RU0E">
    <property type="taxonomic scope" value="Eukaryota"/>
</dbReference>
<dbReference type="GeneTree" id="ENSGT00950000183043"/>
<dbReference type="HOGENOM" id="CLU_005668_2_0_1"/>
<dbReference type="InParanoid" id="Q8IWB4"/>
<dbReference type="OMA" id="MACSHET"/>
<dbReference type="OrthoDB" id="9616581at2759"/>
<dbReference type="PAN-GO" id="Q8IWB4">
    <property type="GO annotations" value="0 GO annotations based on evolutionary models"/>
</dbReference>
<dbReference type="PhylomeDB" id="Q8IWB4"/>
<dbReference type="TreeFam" id="TF338531"/>
<dbReference type="PathwayCommons" id="Q8IWB4"/>
<dbReference type="SignaLink" id="Q8IWB4"/>
<dbReference type="BioGRID-ORCS" id="26165">
    <property type="hits" value="66 hits in 651 CRISPR screens"/>
</dbReference>
<dbReference type="GenomeRNAi" id="26165"/>
<dbReference type="Pharos" id="Q8IWB4">
    <property type="development level" value="Tdark"/>
</dbReference>
<dbReference type="PRO" id="PR:Q8IWB4"/>
<dbReference type="Proteomes" id="UP000005640">
    <property type="component" value="Chromosome 9"/>
</dbReference>
<dbReference type="RNAct" id="Q8IWB4">
    <property type="molecule type" value="protein"/>
</dbReference>
<dbReference type="Bgee" id="ENSG00000276040">
    <property type="expression patterns" value="Expressed in male germ line stem cell (sensu Vertebrata) in testis and 62 other cell types or tissues"/>
</dbReference>
<dbReference type="GO" id="GO:0016020">
    <property type="term" value="C:membrane"/>
    <property type="evidence" value="ECO:0007669"/>
    <property type="project" value="UniProtKB-SubCell"/>
</dbReference>
<dbReference type="GO" id="GO:0030154">
    <property type="term" value="P:cell differentiation"/>
    <property type="evidence" value="ECO:0007669"/>
    <property type="project" value="UniProtKB-KW"/>
</dbReference>
<dbReference type="GO" id="GO:0007283">
    <property type="term" value="P:spermatogenesis"/>
    <property type="evidence" value="ECO:0007669"/>
    <property type="project" value="UniProtKB-KW"/>
</dbReference>
<dbReference type="InterPro" id="IPR039509">
    <property type="entry name" value="SPATA31"/>
</dbReference>
<dbReference type="InterPro" id="IPR027970">
    <property type="entry name" value="SPATA31F3-like"/>
</dbReference>
<dbReference type="PANTHER" id="PTHR21859">
    <property type="entry name" value="ACROSOME-SPECIFIC PROTEIN"/>
    <property type="match status" value="1"/>
</dbReference>
<dbReference type="PANTHER" id="PTHR21859:SF55">
    <property type="entry name" value="SPERMATOGENESIS-ASSOCIATED PROTEIN 31A1-RELATED"/>
    <property type="match status" value="1"/>
</dbReference>
<dbReference type="Pfam" id="PF15371">
    <property type="entry name" value="DUF4599"/>
    <property type="match status" value="1"/>
</dbReference>
<dbReference type="Pfam" id="PF14650">
    <property type="entry name" value="FAM75"/>
    <property type="match status" value="1"/>
</dbReference>
<organism>
    <name type="scientific">Homo sapiens</name>
    <name type="common">Human</name>
    <dbReference type="NCBI Taxonomy" id="9606"/>
    <lineage>
        <taxon>Eukaryota</taxon>
        <taxon>Metazoa</taxon>
        <taxon>Chordata</taxon>
        <taxon>Craniata</taxon>
        <taxon>Vertebrata</taxon>
        <taxon>Euteleostomi</taxon>
        <taxon>Mammalia</taxon>
        <taxon>Eutheria</taxon>
        <taxon>Euarchontoglires</taxon>
        <taxon>Primates</taxon>
        <taxon>Haplorrhini</taxon>
        <taxon>Catarrhini</taxon>
        <taxon>Hominidae</taxon>
        <taxon>Homo</taxon>
    </lineage>
</organism>
<accession>Q8IWB4</accession>
<accession>Q4VX67</accession>
<accession>Q5TZK4</accession>
<accession>Q9Y4Q5</accession>
<gene>
    <name evidence="5" type="primary">SPATA31A7</name>
    <name evidence="5" type="synonym">FAM75A4</name>
    <name evidence="5" type="synonym">FAM75A7</name>
    <name evidence="5" type="synonym">SPATA31A4</name>
</gene>